<keyword id="KW-0249">Electron transport</keyword>
<keyword id="KW-0349">Heme</keyword>
<keyword id="KW-0408">Iron</keyword>
<keyword id="KW-0472">Membrane</keyword>
<keyword id="KW-0479">Metal-binding</keyword>
<keyword id="KW-0496">Mitochondrion</keyword>
<keyword id="KW-0999">Mitochondrion inner membrane</keyword>
<keyword id="KW-0679">Respiratory chain</keyword>
<keyword id="KW-0812">Transmembrane</keyword>
<keyword id="KW-1133">Transmembrane helix</keyword>
<keyword id="KW-0813">Transport</keyword>
<keyword id="KW-0830">Ubiquinone</keyword>
<reference key="1">
    <citation type="journal article" date="2003" name="Syst. Biol.">
        <title>Type I STS markers are more informative than cytochrome B in phylogenetic reconstruction of the Mustelidae (Mammalia: Carnivora).</title>
        <authorList>
            <person name="Koepfli K.-P."/>
            <person name="Wayne R.K."/>
        </authorList>
    </citation>
    <scope>NUCLEOTIDE SEQUENCE [GENOMIC DNA]</scope>
</reference>
<feature type="chain" id="PRO_0000060905" description="Cytochrome b">
    <location>
        <begin position="1"/>
        <end position="379"/>
    </location>
</feature>
<feature type="transmembrane region" description="Helical" evidence="2">
    <location>
        <begin position="33"/>
        <end position="53"/>
    </location>
</feature>
<feature type="transmembrane region" description="Helical" evidence="2">
    <location>
        <begin position="77"/>
        <end position="98"/>
    </location>
</feature>
<feature type="transmembrane region" description="Helical" evidence="2">
    <location>
        <begin position="113"/>
        <end position="133"/>
    </location>
</feature>
<feature type="transmembrane region" description="Helical" evidence="2">
    <location>
        <begin position="178"/>
        <end position="198"/>
    </location>
</feature>
<feature type="transmembrane region" description="Helical" evidence="2">
    <location>
        <begin position="226"/>
        <end position="246"/>
    </location>
</feature>
<feature type="transmembrane region" description="Helical" evidence="2">
    <location>
        <begin position="288"/>
        <end position="308"/>
    </location>
</feature>
<feature type="transmembrane region" description="Helical" evidence="2">
    <location>
        <begin position="320"/>
        <end position="340"/>
    </location>
</feature>
<feature type="transmembrane region" description="Helical" evidence="2">
    <location>
        <begin position="347"/>
        <end position="367"/>
    </location>
</feature>
<feature type="binding site" description="axial binding residue" evidence="2">
    <location>
        <position position="83"/>
    </location>
    <ligand>
        <name>heme b</name>
        <dbReference type="ChEBI" id="CHEBI:60344"/>
        <label>b562</label>
    </ligand>
    <ligandPart>
        <name>Fe</name>
        <dbReference type="ChEBI" id="CHEBI:18248"/>
    </ligandPart>
</feature>
<feature type="binding site" description="axial binding residue" evidence="2">
    <location>
        <position position="97"/>
    </location>
    <ligand>
        <name>heme b</name>
        <dbReference type="ChEBI" id="CHEBI:60344"/>
        <label>b566</label>
    </ligand>
    <ligandPart>
        <name>Fe</name>
        <dbReference type="ChEBI" id="CHEBI:18248"/>
    </ligandPart>
</feature>
<feature type="binding site" description="axial binding residue" evidence="2">
    <location>
        <position position="182"/>
    </location>
    <ligand>
        <name>heme b</name>
        <dbReference type="ChEBI" id="CHEBI:60344"/>
        <label>b562</label>
    </ligand>
    <ligandPart>
        <name>Fe</name>
        <dbReference type="ChEBI" id="CHEBI:18248"/>
    </ligandPart>
</feature>
<feature type="binding site" description="axial binding residue" evidence="2">
    <location>
        <position position="196"/>
    </location>
    <ligand>
        <name>heme b</name>
        <dbReference type="ChEBI" id="CHEBI:60344"/>
        <label>b566</label>
    </ligand>
    <ligandPart>
        <name>Fe</name>
        <dbReference type="ChEBI" id="CHEBI:18248"/>
    </ligandPart>
</feature>
<feature type="binding site" evidence="2">
    <location>
        <position position="201"/>
    </location>
    <ligand>
        <name>a ubiquinone</name>
        <dbReference type="ChEBI" id="CHEBI:16389"/>
    </ligand>
</feature>
<protein>
    <recommendedName>
        <fullName>Cytochrome b</fullName>
    </recommendedName>
    <alternativeName>
        <fullName>Complex III subunit 3</fullName>
    </alternativeName>
    <alternativeName>
        <fullName>Complex III subunit III</fullName>
    </alternativeName>
    <alternativeName>
        <fullName>Cytochrome b-c1 complex subunit 3</fullName>
    </alternativeName>
    <alternativeName>
        <fullName>Ubiquinol-cytochrome-c reductase complex cytochrome b subunit</fullName>
    </alternativeName>
</protein>
<organism>
    <name type="scientific">Eira barbara</name>
    <name type="common">Tayra</name>
    <dbReference type="NCBI Taxonomy" id="204263"/>
    <lineage>
        <taxon>Eukaryota</taxon>
        <taxon>Metazoa</taxon>
        <taxon>Chordata</taxon>
        <taxon>Craniata</taxon>
        <taxon>Vertebrata</taxon>
        <taxon>Euteleostomi</taxon>
        <taxon>Mammalia</taxon>
        <taxon>Eutheria</taxon>
        <taxon>Laurasiatheria</taxon>
        <taxon>Carnivora</taxon>
        <taxon>Caniformia</taxon>
        <taxon>Musteloidea</taxon>
        <taxon>Mustelidae</taxon>
        <taxon>Guloninae</taxon>
        <taxon>Eira</taxon>
    </lineage>
</organism>
<gene>
    <name type="primary">MT-CYB</name>
    <name type="synonym">COB</name>
    <name type="synonym">CYTB</name>
    <name type="synonym">MTCYB</name>
</gene>
<evidence type="ECO:0000250" key="1"/>
<evidence type="ECO:0000250" key="2">
    <source>
        <dbReference type="UniProtKB" id="P00157"/>
    </source>
</evidence>
<evidence type="ECO:0000255" key="3">
    <source>
        <dbReference type="PROSITE-ProRule" id="PRU00967"/>
    </source>
</evidence>
<evidence type="ECO:0000255" key="4">
    <source>
        <dbReference type="PROSITE-ProRule" id="PRU00968"/>
    </source>
</evidence>
<accession>Q85IN8</accession>
<comment type="function">
    <text evidence="2">Component of the ubiquinol-cytochrome c reductase complex (complex III or cytochrome b-c1 complex) that is part of the mitochondrial respiratory chain. The b-c1 complex mediates electron transfer from ubiquinol to cytochrome c. Contributes to the generation of a proton gradient across the mitochondrial membrane that is then used for ATP synthesis.</text>
</comment>
<comment type="cofactor">
    <cofactor evidence="2">
        <name>heme b</name>
        <dbReference type="ChEBI" id="CHEBI:60344"/>
    </cofactor>
    <text evidence="2">Binds 2 heme b groups non-covalently.</text>
</comment>
<comment type="subunit">
    <text evidence="2">The cytochrome bc1 complex contains 11 subunits: 3 respiratory subunits (MT-CYB, CYC1 and UQCRFS1), 2 core proteins (UQCRC1 and UQCRC2) and 6 low-molecular weight proteins (UQCRH/QCR6, UQCRB/QCR7, UQCRQ/QCR8, UQCR10/QCR9, UQCR11/QCR10 and a cleavage product of UQCRFS1). This cytochrome bc1 complex then forms a dimer.</text>
</comment>
<comment type="subcellular location">
    <subcellularLocation>
        <location evidence="2">Mitochondrion inner membrane</location>
        <topology evidence="2">Multi-pass membrane protein</topology>
    </subcellularLocation>
</comment>
<comment type="miscellaneous">
    <text evidence="1">Heme 1 (or BL or b562) is low-potential and absorbs at about 562 nm, and heme 2 (or BH or b566) is high-potential and absorbs at about 566 nm.</text>
</comment>
<comment type="similarity">
    <text evidence="3 4">Belongs to the cytochrome b family.</text>
</comment>
<comment type="caution">
    <text evidence="2">The full-length protein contains only eight transmembrane helices, not nine as predicted by bioinformatics tools.</text>
</comment>
<dbReference type="EMBL" id="AF498154">
    <property type="protein sequence ID" value="AAP19700.1"/>
    <property type="molecule type" value="Genomic_DNA"/>
</dbReference>
<dbReference type="SMR" id="Q85IN8"/>
<dbReference type="GO" id="GO:0005743">
    <property type="term" value="C:mitochondrial inner membrane"/>
    <property type="evidence" value="ECO:0007669"/>
    <property type="project" value="UniProtKB-SubCell"/>
</dbReference>
<dbReference type="GO" id="GO:0045275">
    <property type="term" value="C:respiratory chain complex III"/>
    <property type="evidence" value="ECO:0007669"/>
    <property type="project" value="InterPro"/>
</dbReference>
<dbReference type="GO" id="GO:0046872">
    <property type="term" value="F:metal ion binding"/>
    <property type="evidence" value="ECO:0007669"/>
    <property type="project" value="UniProtKB-KW"/>
</dbReference>
<dbReference type="GO" id="GO:0008121">
    <property type="term" value="F:ubiquinol-cytochrome-c reductase activity"/>
    <property type="evidence" value="ECO:0007669"/>
    <property type="project" value="InterPro"/>
</dbReference>
<dbReference type="GO" id="GO:0006122">
    <property type="term" value="P:mitochondrial electron transport, ubiquinol to cytochrome c"/>
    <property type="evidence" value="ECO:0007669"/>
    <property type="project" value="TreeGrafter"/>
</dbReference>
<dbReference type="CDD" id="cd00290">
    <property type="entry name" value="cytochrome_b_C"/>
    <property type="match status" value="1"/>
</dbReference>
<dbReference type="CDD" id="cd00284">
    <property type="entry name" value="Cytochrome_b_N"/>
    <property type="match status" value="1"/>
</dbReference>
<dbReference type="FunFam" id="1.20.810.10:FF:000002">
    <property type="entry name" value="Cytochrome b"/>
    <property type="match status" value="1"/>
</dbReference>
<dbReference type="Gene3D" id="1.20.810.10">
    <property type="entry name" value="Cytochrome Bc1 Complex, Chain C"/>
    <property type="match status" value="1"/>
</dbReference>
<dbReference type="InterPro" id="IPR005798">
    <property type="entry name" value="Cyt_b/b6_C"/>
</dbReference>
<dbReference type="InterPro" id="IPR036150">
    <property type="entry name" value="Cyt_b/b6_C_sf"/>
</dbReference>
<dbReference type="InterPro" id="IPR005797">
    <property type="entry name" value="Cyt_b/b6_N"/>
</dbReference>
<dbReference type="InterPro" id="IPR027387">
    <property type="entry name" value="Cytb/b6-like_sf"/>
</dbReference>
<dbReference type="InterPro" id="IPR030689">
    <property type="entry name" value="Cytochrome_b"/>
</dbReference>
<dbReference type="InterPro" id="IPR048260">
    <property type="entry name" value="Cytochrome_b_C_euk/bac"/>
</dbReference>
<dbReference type="InterPro" id="IPR048259">
    <property type="entry name" value="Cytochrome_b_N_euk/bac"/>
</dbReference>
<dbReference type="InterPro" id="IPR016174">
    <property type="entry name" value="Di-haem_cyt_TM"/>
</dbReference>
<dbReference type="PANTHER" id="PTHR19271">
    <property type="entry name" value="CYTOCHROME B"/>
    <property type="match status" value="1"/>
</dbReference>
<dbReference type="PANTHER" id="PTHR19271:SF16">
    <property type="entry name" value="CYTOCHROME B"/>
    <property type="match status" value="1"/>
</dbReference>
<dbReference type="Pfam" id="PF00032">
    <property type="entry name" value="Cytochrom_B_C"/>
    <property type="match status" value="1"/>
</dbReference>
<dbReference type="Pfam" id="PF00033">
    <property type="entry name" value="Cytochrome_B"/>
    <property type="match status" value="1"/>
</dbReference>
<dbReference type="PIRSF" id="PIRSF038885">
    <property type="entry name" value="COB"/>
    <property type="match status" value="1"/>
</dbReference>
<dbReference type="SUPFAM" id="SSF81648">
    <property type="entry name" value="a domain/subunit of cytochrome bc1 complex (Ubiquinol-cytochrome c reductase)"/>
    <property type="match status" value="1"/>
</dbReference>
<dbReference type="SUPFAM" id="SSF81342">
    <property type="entry name" value="Transmembrane di-heme cytochromes"/>
    <property type="match status" value="1"/>
</dbReference>
<dbReference type="PROSITE" id="PS51003">
    <property type="entry name" value="CYTB_CTER"/>
    <property type="match status" value="1"/>
</dbReference>
<dbReference type="PROSITE" id="PS51002">
    <property type="entry name" value="CYTB_NTER"/>
    <property type="match status" value="1"/>
</dbReference>
<proteinExistence type="inferred from homology"/>
<sequence>MTNIRKTHPLAKIINNSFIDLPAPSNISAWWNFGSLLGVCLILQILTGLFLAMHYTSDTTTAFSSVTHICRDVNYGWIIRYMHANGASMFFICLFLHIGRGLYYGSYMYLETWNIGIILLFTVMATAFMGYVLPWGQMSFWGATVITNLLSAIPYVGTNLVEWIWGGFSVDKATLTRFFAFHFILPFIVSALAAVHLLFLHETGSNNPSGIPSDSDKIPFHPYYTIKDILGTLLLVLTLMVLVLFSPDLLGDPDNYIPANPLSTPPHIKPEWYFLFAYAILRSIPNKLGGVLALVLSILVLAIVPLLHTSKQRSMMFRPLSQCLFWLLVADLLTLTWIGGQPVEHPFIIIGQLASILYFAILLVLMPTISIIENNLLKW</sequence>
<name>CYB_EIRBA</name>
<geneLocation type="mitochondrion"/>